<dbReference type="EC" id="2.1.1.192" evidence="1"/>
<dbReference type="EMBL" id="CP000261">
    <property type="protein sequence ID" value="ABF36333.1"/>
    <property type="molecule type" value="Genomic_DNA"/>
</dbReference>
<dbReference type="SMR" id="Q1JAS5"/>
<dbReference type="KEGG" id="spj:MGAS2096_Spy1281"/>
<dbReference type="HOGENOM" id="CLU_029101_0_1_9"/>
<dbReference type="GO" id="GO:0005737">
    <property type="term" value="C:cytoplasm"/>
    <property type="evidence" value="ECO:0007669"/>
    <property type="project" value="UniProtKB-SubCell"/>
</dbReference>
<dbReference type="GO" id="GO:0051539">
    <property type="term" value="F:4 iron, 4 sulfur cluster binding"/>
    <property type="evidence" value="ECO:0007669"/>
    <property type="project" value="UniProtKB-UniRule"/>
</dbReference>
<dbReference type="GO" id="GO:0046872">
    <property type="term" value="F:metal ion binding"/>
    <property type="evidence" value="ECO:0007669"/>
    <property type="project" value="UniProtKB-KW"/>
</dbReference>
<dbReference type="GO" id="GO:0070040">
    <property type="term" value="F:rRNA (adenine(2503)-C2-)-methyltransferase activity"/>
    <property type="evidence" value="ECO:0007669"/>
    <property type="project" value="UniProtKB-UniRule"/>
</dbReference>
<dbReference type="GO" id="GO:0019843">
    <property type="term" value="F:rRNA binding"/>
    <property type="evidence" value="ECO:0007669"/>
    <property type="project" value="UniProtKB-UniRule"/>
</dbReference>
<dbReference type="GO" id="GO:0002935">
    <property type="term" value="F:tRNA (adenine(37)-C2)-methyltransferase activity"/>
    <property type="evidence" value="ECO:0007669"/>
    <property type="project" value="UniProtKB-UniRule"/>
</dbReference>
<dbReference type="GO" id="GO:0000049">
    <property type="term" value="F:tRNA binding"/>
    <property type="evidence" value="ECO:0007669"/>
    <property type="project" value="UniProtKB-UniRule"/>
</dbReference>
<dbReference type="GO" id="GO:0070475">
    <property type="term" value="P:rRNA base methylation"/>
    <property type="evidence" value="ECO:0007669"/>
    <property type="project" value="UniProtKB-UniRule"/>
</dbReference>
<dbReference type="GO" id="GO:0030488">
    <property type="term" value="P:tRNA methylation"/>
    <property type="evidence" value="ECO:0007669"/>
    <property type="project" value="UniProtKB-UniRule"/>
</dbReference>
<dbReference type="CDD" id="cd01335">
    <property type="entry name" value="Radical_SAM"/>
    <property type="match status" value="1"/>
</dbReference>
<dbReference type="FunFam" id="3.20.20.70:FF:000014">
    <property type="entry name" value="Probable dual-specificity RNA methyltransferase RlmN"/>
    <property type="match status" value="1"/>
</dbReference>
<dbReference type="Gene3D" id="1.10.150.530">
    <property type="match status" value="1"/>
</dbReference>
<dbReference type="Gene3D" id="3.20.20.70">
    <property type="entry name" value="Aldolase class I"/>
    <property type="match status" value="1"/>
</dbReference>
<dbReference type="HAMAP" id="MF_01849">
    <property type="entry name" value="RNA_methyltr_RlmN"/>
    <property type="match status" value="1"/>
</dbReference>
<dbReference type="InterPro" id="IPR013785">
    <property type="entry name" value="Aldolase_TIM"/>
</dbReference>
<dbReference type="InterPro" id="IPR040072">
    <property type="entry name" value="Methyltransferase_A"/>
</dbReference>
<dbReference type="InterPro" id="IPR048641">
    <property type="entry name" value="RlmN_N"/>
</dbReference>
<dbReference type="InterPro" id="IPR027492">
    <property type="entry name" value="RNA_MTrfase_RlmN"/>
</dbReference>
<dbReference type="InterPro" id="IPR004383">
    <property type="entry name" value="rRNA_lsu_MTrfase_RlmN/Cfr"/>
</dbReference>
<dbReference type="InterPro" id="IPR007197">
    <property type="entry name" value="rSAM"/>
</dbReference>
<dbReference type="NCBIfam" id="TIGR00048">
    <property type="entry name" value="rRNA_mod_RlmN"/>
    <property type="match status" value="1"/>
</dbReference>
<dbReference type="PANTHER" id="PTHR30544">
    <property type="entry name" value="23S RRNA METHYLTRANSFERASE"/>
    <property type="match status" value="1"/>
</dbReference>
<dbReference type="PANTHER" id="PTHR30544:SF5">
    <property type="entry name" value="RADICAL SAM CORE DOMAIN-CONTAINING PROTEIN"/>
    <property type="match status" value="1"/>
</dbReference>
<dbReference type="Pfam" id="PF04055">
    <property type="entry name" value="Radical_SAM"/>
    <property type="match status" value="1"/>
</dbReference>
<dbReference type="Pfam" id="PF21016">
    <property type="entry name" value="RlmN_N"/>
    <property type="match status" value="1"/>
</dbReference>
<dbReference type="PIRSF" id="PIRSF006004">
    <property type="entry name" value="CHP00048"/>
    <property type="match status" value="1"/>
</dbReference>
<dbReference type="SFLD" id="SFLDF00275">
    <property type="entry name" value="adenosine_C2_methyltransferase"/>
    <property type="match status" value="1"/>
</dbReference>
<dbReference type="SFLD" id="SFLDG01062">
    <property type="entry name" value="methyltransferase_(Class_A)"/>
    <property type="match status" value="1"/>
</dbReference>
<dbReference type="SUPFAM" id="SSF102114">
    <property type="entry name" value="Radical SAM enzymes"/>
    <property type="match status" value="1"/>
</dbReference>
<dbReference type="PROSITE" id="PS51918">
    <property type="entry name" value="RADICAL_SAM"/>
    <property type="match status" value="1"/>
</dbReference>
<comment type="function">
    <text evidence="1">Specifically methylates position 2 of adenine 2503 in 23S rRNA and position 2 of adenine 37 in tRNAs.</text>
</comment>
<comment type="catalytic activity">
    <reaction evidence="1">
        <text>adenosine(2503) in 23S rRNA + 2 reduced [2Fe-2S]-[ferredoxin] + 2 S-adenosyl-L-methionine = 2-methyladenosine(2503) in 23S rRNA + 5'-deoxyadenosine + L-methionine + 2 oxidized [2Fe-2S]-[ferredoxin] + S-adenosyl-L-homocysteine</text>
        <dbReference type="Rhea" id="RHEA:42916"/>
        <dbReference type="Rhea" id="RHEA-COMP:10000"/>
        <dbReference type="Rhea" id="RHEA-COMP:10001"/>
        <dbReference type="Rhea" id="RHEA-COMP:10152"/>
        <dbReference type="Rhea" id="RHEA-COMP:10282"/>
        <dbReference type="ChEBI" id="CHEBI:17319"/>
        <dbReference type="ChEBI" id="CHEBI:33737"/>
        <dbReference type="ChEBI" id="CHEBI:33738"/>
        <dbReference type="ChEBI" id="CHEBI:57844"/>
        <dbReference type="ChEBI" id="CHEBI:57856"/>
        <dbReference type="ChEBI" id="CHEBI:59789"/>
        <dbReference type="ChEBI" id="CHEBI:74411"/>
        <dbReference type="ChEBI" id="CHEBI:74497"/>
        <dbReference type="EC" id="2.1.1.192"/>
    </reaction>
</comment>
<comment type="catalytic activity">
    <reaction evidence="1">
        <text>adenosine(37) in tRNA + 2 reduced [2Fe-2S]-[ferredoxin] + 2 S-adenosyl-L-methionine = 2-methyladenosine(37) in tRNA + 5'-deoxyadenosine + L-methionine + 2 oxidized [2Fe-2S]-[ferredoxin] + S-adenosyl-L-homocysteine</text>
        <dbReference type="Rhea" id="RHEA:43332"/>
        <dbReference type="Rhea" id="RHEA-COMP:10000"/>
        <dbReference type="Rhea" id="RHEA-COMP:10001"/>
        <dbReference type="Rhea" id="RHEA-COMP:10162"/>
        <dbReference type="Rhea" id="RHEA-COMP:10485"/>
        <dbReference type="ChEBI" id="CHEBI:17319"/>
        <dbReference type="ChEBI" id="CHEBI:33737"/>
        <dbReference type="ChEBI" id="CHEBI:33738"/>
        <dbReference type="ChEBI" id="CHEBI:57844"/>
        <dbReference type="ChEBI" id="CHEBI:57856"/>
        <dbReference type="ChEBI" id="CHEBI:59789"/>
        <dbReference type="ChEBI" id="CHEBI:74411"/>
        <dbReference type="ChEBI" id="CHEBI:74497"/>
        <dbReference type="EC" id="2.1.1.192"/>
    </reaction>
</comment>
<comment type="cofactor">
    <cofactor evidence="1">
        <name>[4Fe-4S] cluster</name>
        <dbReference type="ChEBI" id="CHEBI:49883"/>
    </cofactor>
    <text evidence="1">Binds 1 [4Fe-4S] cluster. The cluster is coordinated with 3 cysteines and an exchangeable S-adenosyl-L-methionine.</text>
</comment>
<comment type="subcellular location">
    <subcellularLocation>
        <location evidence="1">Cytoplasm</location>
    </subcellularLocation>
</comment>
<comment type="miscellaneous">
    <text evidence="1">Reaction proceeds by a ping-pong mechanism involving intermediate methylation of a conserved cysteine residue.</text>
</comment>
<comment type="similarity">
    <text evidence="1">Belongs to the radical SAM superfamily. RlmN family.</text>
</comment>
<keyword id="KW-0004">4Fe-4S</keyword>
<keyword id="KW-0963">Cytoplasm</keyword>
<keyword id="KW-1015">Disulfide bond</keyword>
<keyword id="KW-0408">Iron</keyword>
<keyword id="KW-0411">Iron-sulfur</keyword>
<keyword id="KW-0479">Metal-binding</keyword>
<keyword id="KW-0489">Methyltransferase</keyword>
<keyword id="KW-0698">rRNA processing</keyword>
<keyword id="KW-0949">S-adenosyl-L-methionine</keyword>
<keyword id="KW-0808">Transferase</keyword>
<keyword id="KW-0819">tRNA processing</keyword>
<evidence type="ECO:0000255" key="1">
    <source>
        <dbReference type="HAMAP-Rule" id="MF_01849"/>
    </source>
</evidence>
<evidence type="ECO:0000255" key="2">
    <source>
        <dbReference type="PROSITE-ProRule" id="PRU01266"/>
    </source>
</evidence>
<gene>
    <name evidence="1" type="primary">rlmN</name>
    <name type="ordered locus">MGAS2096_Spy1281</name>
</gene>
<sequence>MKPSIYSLTRDELIAWAVERGQKQFRATQIWDWLYKKRVQSFEEMTNISKDFVSILNDSFCVNPLKQRVVQESADGTVKYLFELPDGMLIETVLMRQHYGHSVCVTTQVGCNIGCTFCASGLIKKQRDLNSGEITAQIMLVQKYFDDRKQGERVSHVVVMGIGEPFDNYKNVMCFLRVINDDNGLAIGARHITVSTSGLAHKIRDFANEGVQVNLAVSLHAPNNDLRSRIMRVNRSFPLEKLFSAIEYYIEKTNRRVTFEYIMLNEVNDSIKQAQELADLTKTIRKLSYVNLIPYNPVSEHDQYSRSLKERVLAFYDVLKKNGVNCVVRQEHGTDIDAACGQLRSKTMKKDREKVTATK</sequence>
<feature type="chain" id="PRO_0000350459" description="Probable dual-specificity RNA methyltransferase RlmN">
    <location>
        <begin position="1"/>
        <end position="359"/>
    </location>
</feature>
<feature type="domain" description="Radical SAM core" evidence="2">
    <location>
        <begin position="97"/>
        <end position="335"/>
    </location>
</feature>
<feature type="active site" description="Proton acceptor" evidence="1">
    <location>
        <position position="91"/>
    </location>
</feature>
<feature type="active site" description="S-methylcysteine intermediate" evidence="1">
    <location>
        <position position="340"/>
    </location>
</feature>
<feature type="binding site" evidence="1">
    <location>
        <position position="111"/>
    </location>
    <ligand>
        <name>[4Fe-4S] cluster</name>
        <dbReference type="ChEBI" id="CHEBI:49883"/>
        <note>4Fe-4S-S-AdoMet</note>
    </ligand>
</feature>
<feature type="binding site" evidence="1">
    <location>
        <position position="115"/>
    </location>
    <ligand>
        <name>[4Fe-4S] cluster</name>
        <dbReference type="ChEBI" id="CHEBI:49883"/>
        <note>4Fe-4S-S-AdoMet</note>
    </ligand>
</feature>
<feature type="binding site" evidence="1">
    <location>
        <position position="118"/>
    </location>
    <ligand>
        <name>[4Fe-4S] cluster</name>
        <dbReference type="ChEBI" id="CHEBI:49883"/>
        <note>4Fe-4S-S-AdoMet</note>
    </ligand>
</feature>
<feature type="binding site" evidence="1">
    <location>
        <begin position="163"/>
        <end position="164"/>
    </location>
    <ligand>
        <name>S-adenosyl-L-methionine</name>
        <dbReference type="ChEBI" id="CHEBI:59789"/>
    </ligand>
</feature>
<feature type="binding site" evidence="1">
    <location>
        <position position="195"/>
    </location>
    <ligand>
        <name>S-adenosyl-L-methionine</name>
        <dbReference type="ChEBI" id="CHEBI:59789"/>
    </ligand>
</feature>
<feature type="binding site" evidence="1">
    <location>
        <begin position="218"/>
        <end position="220"/>
    </location>
    <ligand>
        <name>S-adenosyl-L-methionine</name>
        <dbReference type="ChEBI" id="CHEBI:59789"/>
    </ligand>
</feature>
<feature type="binding site" evidence="1">
    <location>
        <position position="296"/>
    </location>
    <ligand>
        <name>S-adenosyl-L-methionine</name>
        <dbReference type="ChEBI" id="CHEBI:59789"/>
    </ligand>
</feature>
<feature type="disulfide bond" description="(transient)" evidence="1">
    <location>
        <begin position="104"/>
        <end position="340"/>
    </location>
</feature>
<organism>
    <name type="scientific">Streptococcus pyogenes serotype M12 (strain MGAS2096)</name>
    <dbReference type="NCBI Taxonomy" id="370553"/>
    <lineage>
        <taxon>Bacteria</taxon>
        <taxon>Bacillati</taxon>
        <taxon>Bacillota</taxon>
        <taxon>Bacilli</taxon>
        <taxon>Lactobacillales</taxon>
        <taxon>Streptococcaceae</taxon>
        <taxon>Streptococcus</taxon>
    </lineage>
</organism>
<accession>Q1JAS5</accession>
<protein>
    <recommendedName>
        <fullName evidence="1">Probable dual-specificity RNA methyltransferase RlmN</fullName>
        <ecNumber evidence="1">2.1.1.192</ecNumber>
    </recommendedName>
    <alternativeName>
        <fullName evidence="1">23S rRNA (adenine(2503)-C(2))-methyltransferase</fullName>
    </alternativeName>
    <alternativeName>
        <fullName evidence="1">23S rRNA m2A2503 methyltransferase</fullName>
    </alternativeName>
    <alternativeName>
        <fullName evidence="1">Ribosomal RNA large subunit methyltransferase N</fullName>
    </alternativeName>
    <alternativeName>
        <fullName evidence="1">tRNA (adenine(37)-C(2))-methyltransferase</fullName>
    </alternativeName>
    <alternativeName>
        <fullName evidence="1">tRNA m2A37 methyltransferase</fullName>
    </alternativeName>
</protein>
<proteinExistence type="inferred from homology"/>
<name>RLMN_STRPB</name>
<reference key="1">
    <citation type="journal article" date="2006" name="Proc. Natl. Acad. Sci. U.S.A.">
        <title>Molecular genetic anatomy of inter- and intraserotype variation in the human bacterial pathogen group A Streptococcus.</title>
        <authorList>
            <person name="Beres S.B."/>
            <person name="Richter E.W."/>
            <person name="Nagiec M.J."/>
            <person name="Sumby P."/>
            <person name="Porcella S.F."/>
            <person name="DeLeo F.R."/>
            <person name="Musser J.M."/>
        </authorList>
    </citation>
    <scope>NUCLEOTIDE SEQUENCE [LARGE SCALE GENOMIC DNA]</scope>
    <source>
        <strain>MGAS2096</strain>
    </source>
</reference>